<proteinExistence type="inferred from homology"/>
<protein>
    <recommendedName>
        <fullName>Cytochrome b</fullName>
    </recommendedName>
    <alternativeName>
        <fullName>Complex III subunit 3</fullName>
    </alternativeName>
    <alternativeName>
        <fullName>Complex III subunit III</fullName>
    </alternativeName>
    <alternativeName>
        <fullName>Cytochrome b-c1 complex subunit 3</fullName>
    </alternativeName>
    <alternativeName>
        <fullName>Ubiquinol-cytochrome-c reductase complex cytochrome b subunit</fullName>
    </alternativeName>
</protein>
<gene>
    <name type="primary">MT-CYB</name>
    <name type="synonym">COB</name>
    <name type="synonym">CYTB</name>
    <name type="synonym">MTCYB</name>
</gene>
<accession>Q34399</accession>
<geneLocation type="mitochondrion"/>
<organism>
    <name type="scientific">Dasyurus viverrinus</name>
    <name type="common">Eastern quoll</name>
    <name type="synonym">Didelphis viverrina</name>
    <dbReference type="NCBI Taxonomy" id="9279"/>
    <lineage>
        <taxon>Eukaryota</taxon>
        <taxon>Metazoa</taxon>
        <taxon>Chordata</taxon>
        <taxon>Craniata</taxon>
        <taxon>Vertebrata</taxon>
        <taxon>Euteleostomi</taxon>
        <taxon>Mammalia</taxon>
        <taxon>Metatheria</taxon>
        <taxon>Dasyuromorphia</taxon>
        <taxon>Dasyuridae</taxon>
        <taxon>Dasyurus</taxon>
    </lineage>
</organism>
<name>CYB_DASVI</name>
<sequence length="381" mass="42908">MINMRKTHPLLKIINHSFIDLPAPSNISAWWNFGSLLGVCLIIQILTGLFLAMHYTSDTLTAFSSVAHICRDVNHGWLLRNLHANGASMFFMCLFLHVGRGIYYGSYLYKETWNIGVILLLTVMATAFVGYVLPWGQMSFWGATVITNLLSAIPYIGTTLAEWIWGGFAVDKATLTRFFAFHFILPFIIMALAIVHLLFLHETGSNNPSGINPDSDKIPFHPYYTIKDALGFMFLLLTLLLLALFSPDLLGDPDNFSPANPLNTPPHIKPEWYFLFAYAILRSIPNKLGGVLALLASILILLIIPLLHTANQRSMMFRPVSQTLFWILTANLITLTWIGGQPVEQPFIIIGQLASMLYFMLILILMPLAGLFENYMLKPKW</sequence>
<comment type="function">
    <text evidence="2">Component of the ubiquinol-cytochrome c reductase complex (complex III or cytochrome b-c1 complex) that is part of the mitochondrial respiratory chain. The b-c1 complex mediates electron transfer from ubiquinol to cytochrome c. Contributes to the generation of a proton gradient across the mitochondrial membrane that is then used for ATP synthesis.</text>
</comment>
<comment type="cofactor">
    <cofactor evidence="2">
        <name>heme b</name>
        <dbReference type="ChEBI" id="CHEBI:60344"/>
    </cofactor>
    <text evidence="2">Binds 2 heme b groups non-covalently.</text>
</comment>
<comment type="subunit">
    <text evidence="2">The cytochrome bc1 complex contains 11 subunits: 3 respiratory subunits (MT-CYB, CYC1 and UQCRFS1), 2 core proteins (UQCRC1 and UQCRC2) and 6 low-molecular weight proteins (UQCRH/QCR6, UQCRB/QCR7, UQCRQ/QCR8, UQCR10/QCR9, UQCR11/QCR10 and a cleavage product of UQCRFS1). This cytochrome bc1 complex then forms a dimer.</text>
</comment>
<comment type="subcellular location">
    <subcellularLocation>
        <location evidence="2">Mitochondrion inner membrane</location>
        <topology evidence="2">Multi-pass membrane protein</topology>
    </subcellularLocation>
</comment>
<comment type="miscellaneous">
    <text evidence="1">Heme 1 (or BL or b562) is low-potential and absorbs at about 562 nm, and heme 2 (or BH or b566) is high-potential and absorbs at about 566 nm.</text>
</comment>
<comment type="similarity">
    <text evidence="3 4">Belongs to the cytochrome b family.</text>
</comment>
<comment type="caution">
    <text evidence="2">The full-length protein contains only eight transmembrane helices, not nine as predicted by bioinformatics tools.</text>
</comment>
<dbReference type="EMBL" id="U07582">
    <property type="protein sequence ID" value="AAC03627.1"/>
    <property type="molecule type" value="Genomic_DNA"/>
</dbReference>
<dbReference type="SMR" id="Q34399"/>
<dbReference type="GO" id="GO:0005743">
    <property type="term" value="C:mitochondrial inner membrane"/>
    <property type="evidence" value="ECO:0007669"/>
    <property type="project" value="UniProtKB-SubCell"/>
</dbReference>
<dbReference type="GO" id="GO:0045275">
    <property type="term" value="C:respiratory chain complex III"/>
    <property type="evidence" value="ECO:0007669"/>
    <property type="project" value="InterPro"/>
</dbReference>
<dbReference type="GO" id="GO:0046872">
    <property type="term" value="F:metal ion binding"/>
    <property type="evidence" value="ECO:0007669"/>
    <property type="project" value="UniProtKB-KW"/>
</dbReference>
<dbReference type="GO" id="GO:0008121">
    <property type="term" value="F:ubiquinol-cytochrome-c reductase activity"/>
    <property type="evidence" value="ECO:0007669"/>
    <property type="project" value="InterPro"/>
</dbReference>
<dbReference type="GO" id="GO:0006122">
    <property type="term" value="P:mitochondrial electron transport, ubiquinol to cytochrome c"/>
    <property type="evidence" value="ECO:0007669"/>
    <property type="project" value="TreeGrafter"/>
</dbReference>
<dbReference type="CDD" id="cd00290">
    <property type="entry name" value="cytochrome_b_C"/>
    <property type="match status" value="1"/>
</dbReference>
<dbReference type="CDD" id="cd00284">
    <property type="entry name" value="Cytochrome_b_N"/>
    <property type="match status" value="1"/>
</dbReference>
<dbReference type="FunFam" id="1.20.810.10:FF:000002">
    <property type="entry name" value="Cytochrome b"/>
    <property type="match status" value="1"/>
</dbReference>
<dbReference type="Gene3D" id="1.20.810.10">
    <property type="entry name" value="Cytochrome Bc1 Complex, Chain C"/>
    <property type="match status" value="1"/>
</dbReference>
<dbReference type="InterPro" id="IPR005798">
    <property type="entry name" value="Cyt_b/b6_C"/>
</dbReference>
<dbReference type="InterPro" id="IPR036150">
    <property type="entry name" value="Cyt_b/b6_C_sf"/>
</dbReference>
<dbReference type="InterPro" id="IPR005797">
    <property type="entry name" value="Cyt_b/b6_N"/>
</dbReference>
<dbReference type="InterPro" id="IPR027387">
    <property type="entry name" value="Cytb/b6-like_sf"/>
</dbReference>
<dbReference type="InterPro" id="IPR030689">
    <property type="entry name" value="Cytochrome_b"/>
</dbReference>
<dbReference type="InterPro" id="IPR048260">
    <property type="entry name" value="Cytochrome_b_C_euk/bac"/>
</dbReference>
<dbReference type="InterPro" id="IPR048259">
    <property type="entry name" value="Cytochrome_b_N_euk/bac"/>
</dbReference>
<dbReference type="InterPro" id="IPR016174">
    <property type="entry name" value="Di-haem_cyt_TM"/>
</dbReference>
<dbReference type="PANTHER" id="PTHR19271">
    <property type="entry name" value="CYTOCHROME B"/>
    <property type="match status" value="1"/>
</dbReference>
<dbReference type="PANTHER" id="PTHR19271:SF16">
    <property type="entry name" value="CYTOCHROME B"/>
    <property type="match status" value="1"/>
</dbReference>
<dbReference type="Pfam" id="PF00032">
    <property type="entry name" value="Cytochrom_B_C"/>
    <property type="match status" value="1"/>
</dbReference>
<dbReference type="Pfam" id="PF00033">
    <property type="entry name" value="Cytochrome_B"/>
    <property type="match status" value="1"/>
</dbReference>
<dbReference type="PIRSF" id="PIRSF038885">
    <property type="entry name" value="COB"/>
    <property type="match status" value="1"/>
</dbReference>
<dbReference type="SUPFAM" id="SSF81648">
    <property type="entry name" value="a domain/subunit of cytochrome bc1 complex (Ubiquinol-cytochrome c reductase)"/>
    <property type="match status" value="1"/>
</dbReference>
<dbReference type="SUPFAM" id="SSF81342">
    <property type="entry name" value="Transmembrane di-heme cytochromes"/>
    <property type="match status" value="1"/>
</dbReference>
<dbReference type="PROSITE" id="PS51003">
    <property type="entry name" value="CYTB_CTER"/>
    <property type="match status" value="1"/>
</dbReference>
<dbReference type="PROSITE" id="PS51002">
    <property type="entry name" value="CYTB_NTER"/>
    <property type="match status" value="1"/>
</dbReference>
<reference key="1">
    <citation type="journal article" date="1994" name="J. Mammal. Evol.">
        <title>Phylogenetic structure of the marsupial family Dasyuridae based on cytochrome-b DNA sequences.</title>
        <authorList>
            <person name="Krajewski C."/>
            <person name="Painter J."/>
            <person name="Buckley L."/>
            <person name="Westerman M."/>
        </authorList>
    </citation>
    <scope>NUCLEOTIDE SEQUENCE [GENOMIC DNA]</scope>
</reference>
<feature type="chain" id="PRO_0000060871" description="Cytochrome b">
    <location>
        <begin position="1"/>
        <end position="381"/>
    </location>
</feature>
<feature type="transmembrane region" description="Helical" evidence="2">
    <location>
        <begin position="33"/>
        <end position="53"/>
    </location>
</feature>
<feature type="transmembrane region" description="Helical" evidence="2">
    <location>
        <begin position="77"/>
        <end position="98"/>
    </location>
</feature>
<feature type="transmembrane region" description="Helical" evidence="2">
    <location>
        <begin position="113"/>
        <end position="133"/>
    </location>
</feature>
<feature type="transmembrane region" description="Helical" evidence="2">
    <location>
        <begin position="178"/>
        <end position="198"/>
    </location>
</feature>
<feature type="transmembrane region" description="Helical" evidence="2">
    <location>
        <begin position="226"/>
        <end position="246"/>
    </location>
</feature>
<feature type="transmembrane region" description="Helical" evidence="2">
    <location>
        <begin position="288"/>
        <end position="308"/>
    </location>
</feature>
<feature type="transmembrane region" description="Helical" evidence="2">
    <location>
        <begin position="320"/>
        <end position="340"/>
    </location>
</feature>
<feature type="transmembrane region" description="Helical" evidence="2">
    <location>
        <begin position="347"/>
        <end position="367"/>
    </location>
</feature>
<feature type="binding site" description="axial binding residue" evidence="2">
    <location>
        <position position="83"/>
    </location>
    <ligand>
        <name>heme b</name>
        <dbReference type="ChEBI" id="CHEBI:60344"/>
        <label>b562</label>
    </ligand>
    <ligandPart>
        <name>Fe</name>
        <dbReference type="ChEBI" id="CHEBI:18248"/>
    </ligandPart>
</feature>
<feature type="binding site" description="axial binding residue" evidence="2">
    <location>
        <position position="97"/>
    </location>
    <ligand>
        <name>heme b</name>
        <dbReference type="ChEBI" id="CHEBI:60344"/>
        <label>b566</label>
    </ligand>
    <ligandPart>
        <name>Fe</name>
        <dbReference type="ChEBI" id="CHEBI:18248"/>
    </ligandPart>
</feature>
<feature type="binding site" description="axial binding residue" evidence="2">
    <location>
        <position position="182"/>
    </location>
    <ligand>
        <name>heme b</name>
        <dbReference type="ChEBI" id="CHEBI:60344"/>
        <label>b562</label>
    </ligand>
    <ligandPart>
        <name>Fe</name>
        <dbReference type="ChEBI" id="CHEBI:18248"/>
    </ligandPart>
</feature>
<feature type="binding site" description="axial binding residue" evidence="2">
    <location>
        <position position="196"/>
    </location>
    <ligand>
        <name>heme b</name>
        <dbReference type="ChEBI" id="CHEBI:60344"/>
        <label>b566</label>
    </ligand>
    <ligandPart>
        <name>Fe</name>
        <dbReference type="ChEBI" id="CHEBI:18248"/>
    </ligandPart>
</feature>
<feature type="binding site" evidence="2">
    <location>
        <position position="201"/>
    </location>
    <ligand>
        <name>a ubiquinone</name>
        <dbReference type="ChEBI" id="CHEBI:16389"/>
    </ligand>
</feature>
<evidence type="ECO:0000250" key="1"/>
<evidence type="ECO:0000250" key="2">
    <source>
        <dbReference type="UniProtKB" id="P00157"/>
    </source>
</evidence>
<evidence type="ECO:0000255" key="3">
    <source>
        <dbReference type="PROSITE-ProRule" id="PRU00967"/>
    </source>
</evidence>
<evidence type="ECO:0000255" key="4">
    <source>
        <dbReference type="PROSITE-ProRule" id="PRU00968"/>
    </source>
</evidence>
<keyword id="KW-0249">Electron transport</keyword>
<keyword id="KW-0349">Heme</keyword>
<keyword id="KW-0408">Iron</keyword>
<keyword id="KW-0472">Membrane</keyword>
<keyword id="KW-0479">Metal-binding</keyword>
<keyword id="KW-0496">Mitochondrion</keyword>
<keyword id="KW-0999">Mitochondrion inner membrane</keyword>
<keyword id="KW-0679">Respiratory chain</keyword>
<keyword id="KW-0812">Transmembrane</keyword>
<keyword id="KW-1133">Transmembrane helix</keyword>
<keyword id="KW-0813">Transport</keyword>
<keyword id="KW-0830">Ubiquinone</keyword>